<protein>
    <recommendedName>
        <fullName evidence="1">UPF0314 protein NGR_c32320</fullName>
    </recommendedName>
</protein>
<organism>
    <name type="scientific">Sinorhizobium fredii (strain NBRC 101917 / NGR234)</name>
    <dbReference type="NCBI Taxonomy" id="394"/>
    <lineage>
        <taxon>Bacteria</taxon>
        <taxon>Pseudomonadati</taxon>
        <taxon>Pseudomonadota</taxon>
        <taxon>Alphaproteobacteria</taxon>
        <taxon>Hyphomicrobiales</taxon>
        <taxon>Rhizobiaceae</taxon>
        <taxon>Sinorhizobium/Ensifer group</taxon>
        <taxon>Sinorhizobium</taxon>
    </lineage>
</organism>
<sequence length="197" mass="21953">MTIAAGTDDNRQRSTWIWLIACLGVVAIQILTQHLMGRLWICECGYVKLWEGVVNSSGNSQHISDWYTPSHIIHGFLFYGLGYLLLRGKPLSVRLLLATLIESAWEIAENTPMVINRYRSATISLDYFGDSILNSTMDTLAMAAGFLLASRLPVAVTVTIAIVLELFTGWIIRDNLTLNVLMLVWPLDAVKAWQAGL</sequence>
<evidence type="ECO:0000255" key="1">
    <source>
        <dbReference type="HAMAP-Rule" id="MF_01514"/>
    </source>
</evidence>
<dbReference type="EMBL" id="CP001389">
    <property type="protein sequence ID" value="ACP26965.1"/>
    <property type="molecule type" value="Genomic_DNA"/>
</dbReference>
<dbReference type="RefSeq" id="WP_012709713.1">
    <property type="nucleotide sequence ID" value="NC_012587.1"/>
</dbReference>
<dbReference type="RefSeq" id="YP_002827718.1">
    <property type="nucleotide sequence ID" value="NC_012587.1"/>
</dbReference>
<dbReference type="STRING" id="394.NGR_c32320"/>
<dbReference type="KEGG" id="rhi:NGR_c32320"/>
<dbReference type="PATRIC" id="fig|394.7.peg.6073"/>
<dbReference type="eggNOG" id="ENOG502ZZUX">
    <property type="taxonomic scope" value="Bacteria"/>
</dbReference>
<dbReference type="HOGENOM" id="CLU_1395337_0_0_5"/>
<dbReference type="OrthoDB" id="9811954at2"/>
<dbReference type="Proteomes" id="UP000001054">
    <property type="component" value="Chromosome"/>
</dbReference>
<dbReference type="GO" id="GO:0005886">
    <property type="term" value="C:plasma membrane"/>
    <property type="evidence" value="ECO:0007669"/>
    <property type="project" value="UniProtKB-SubCell"/>
</dbReference>
<dbReference type="HAMAP" id="MF_01514">
    <property type="entry name" value="UPF0314"/>
    <property type="match status" value="1"/>
</dbReference>
<dbReference type="InterPro" id="IPR019691">
    <property type="entry name" value="DUF2585"/>
</dbReference>
<dbReference type="NCBIfam" id="NF002099">
    <property type="entry name" value="PRK00944.1"/>
    <property type="match status" value="1"/>
</dbReference>
<dbReference type="Pfam" id="PF10755">
    <property type="entry name" value="DUF2585"/>
    <property type="match status" value="1"/>
</dbReference>
<keyword id="KW-1003">Cell membrane</keyword>
<keyword id="KW-0472">Membrane</keyword>
<keyword id="KW-1185">Reference proteome</keyword>
<keyword id="KW-0812">Transmembrane</keyword>
<keyword id="KW-1133">Transmembrane helix</keyword>
<name>Y3232_SINFN</name>
<accession>C3MAH2</accession>
<gene>
    <name type="ordered locus">NGR_c32320</name>
</gene>
<comment type="subcellular location">
    <subcellularLocation>
        <location evidence="1">Cell membrane</location>
        <topology evidence="1">Multi-pass membrane protein</topology>
    </subcellularLocation>
</comment>
<comment type="similarity">
    <text evidence="1">Belongs to the UPF0314 family.</text>
</comment>
<reference key="1">
    <citation type="journal article" date="2009" name="Appl. Environ. Microbiol.">
        <title>Rhizobium sp. strain NGR234 possesses a remarkable number of secretion systems.</title>
        <authorList>
            <person name="Schmeisser C."/>
            <person name="Liesegang H."/>
            <person name="Krysciak D."/>
            <person name="Bakkou N."/>
            <person name="Le Quere A."/>
            <person name="Wollherr A."/>
            <person name="Heinemeyer I."/>
            <person name="Morgenstern B."/>
            <person name="Pommerening-Roeser A."/>
            <person name="Flores M."/>
            <person name="Palacios R."/>
            <person name="Brenner S."/>
            <person name="Gottschalk G."/>
            <person name="Schmitz R.A."/>
            <person name="Broughton W.J."/>
            <person name="Perret X."/>
            <person name="Strittmatter A.W."/>
            <person name="Streit W.R."/>
        </authorList>
    </citation>
    <scope>NUCLEOTIDE SEQUENCE [LARGE SCALE GENOMIC DNA]</scope>
    <source>
        <strain>NBRC 101917 / NGR234</strain>
    </source>
</reference>
<feature type="chain" id="PRO_1000185066" description="UPF0314 protein NGR_c32320">
    <location>
        <begin position="1"/>
        <end position="197"/>
    </location>
</feature>
<feature type="transmembrane region" description="Helical" evidence="1">
    <location>
        <begin position="16"/>
        <end position="36"/>
    </location>
</feature>
<feature type="transmembrane region" description="Helical" evidence="1">
    <location>
        <begin position="66"/>
        <end position="86"/>
    </location>
</feature>
<feature type="transmembrane region" description="Helical" evidence="1">
    <location>
        <begin position="152"/>
        <end position="172"/>
    </location>
</feature>
<proteinExistence type="inferred from homology"/>